<reference key="1">
    <citation type="journal article" date="2008" name="Mol. Biol. Evol.">
        <title>Mitochondrial genome evolution in the social amoebae.</title>
        <authorList>
            <person name="Heidel A.J."/>
            <person name="Gloeckner G."/>
        </authorList>
    </citation>
    <scope>NUCLEOTIDE SEQUENCE [LARGE SCALE GENOMIC DNA]</scope>
</reference>
<organism>
    <name type="scientific">Dictyostelium citrinum</name>
    <name type="common">Slime mold</name>
    <dbReference type="NCBI Taxonomy" id="361072"/>
    <lineage>
        <taxon>Eukaryota</taxon>
        <taxon>Amoebozoa</taxon>
        <taxon>Evosea</taxon>
        <taxon>Eumycetozoa</taxon>
        <taxon>Dictyostelia</taxon>
        <taxon>Dictyosteliales</taxon>
        <taxon>Dictyosteliaceae</taxon>
        <taxon>Dictyostelium</taxon>
    </lineage>
</organism>
<geneLocation type="mitochondrion"/>
<name>ATP6_DICCI</name>
<sequence length="244" mass="27845">MKSLFEQFEIDLYCIIITRFFDVSITTITVYLGLLMVIVIGMYKVSLYKATLIGNNNWQHIGEMIYEFVVDLILEQVGKPGILFFPFIMSLFLFVLTLNVMGLIPLSFTVTGQLLVTFTLAITIMIGITIWGFRIHGIKFLNIFVPSGIEPWLLPLLVFIEIMSYVLRPISLAVRLFANMLAGHLLIHIIGVAAIYLMQFYFIGILPWICVIAFMFLELGIAFLQAYVFVLLTLIYIANIINLH</sequence>
<gene>
    <name type="primary">atp6</name>
</gene>
<comment type="function">
    <text evidence="1">Mitochondrial membrane ATP synthase (F(1)F(0) ATP synthase or Complex V) produces ATP from ADP in the presence of a proton gradient across the membrane which is generated by electron transport complexes of the respiratory chain. F-type ATPases consist of two structural domains, F(1) - containing the extramembraneous catalytic core and F(0) - containing the membrane proton channel, linked together by a central stalk and a peripheral stalk. During catalysis, ATP synthesis in the catalytic domain of F(1) is coupled via a rotary mechanism of the central stalk subunits to proton translocation. Key component of the proton channel; it may play a direct role in the translocation of protons across the membrane (By similarity).</text>
</comment>
<comment type="subunit">
    <text evidence="1">F-type ATPases have 2 components, CF(1) - the catalytic core - and CF(0) - the membrane proton channel. CF(1) has five subunits: alpha(3), beta(3), gamma(1), delta(1), epsilon(1). CF(0) has three main subunits: a, b and c (By similarity).</text>
</comment>
<comment type="subcellular location">
    <subcellularLocation>
        <location evidence="1">Mitochondrion inner membrane</location>
        <topology evidence="1">Multi-pass membrane protein</topology>
    </subcellularLocation>
</comment>
<comment type="similarity">
    <text evidence="3">Belongs to the ATPase A chain family.</text>
</comment>
<accession>Q2LCR6</accession>
<keyword id="KW-0066">ATP synthesis</keyword>
<keyword id="KW-0138">CF(0)</keyword>
<keyword id="KW-0375">Hydrogen ion transport</keyword>
<keyword id="KW-0406">Ion transport</keyword>
<keyword id="KW-0472">Membrane</keyword>
<keyword id="KW-0496">Mitochondrion</keyword>
<keyword id="KW-0999">Mitochondrion inner membrane</keyword>
<keyword id="KW-0812">Transmembrane</keyword>
<keyword id="KW-1133">Transmembrane helix</keyword>
<keyword id="KW-0813">Transport</keyword>
<protein>
    <recommendedName>
        <fullName>ATP synthase subunit a</fullName>
    </recommendedName>
    <alternativeName>
        <fullName>F-ATPase protein 6</fullName>
    </alternativeName>
</protein>
<feature type="chain" id="PRO_0000312388" description="ATP synthase subunit a">
    <location>
        <begin position="1"/>
        <end position="244"/>
    </location>
</feature>
<feature type="transmembrane region" description="Helical" evidence="2">
    <location>
        <begin position="20"/>
        <end position="40"/>
    </location>
</feature>
<feature type="transmembrane region" description="Helical" evidence="2">
    <location>
        <begin position="81"/>
        <end position="101"/>
    </location>
</feature>
<feature type="transmembrane region" description="Helical" evidence="2">
    <location>
        <begin position="113"/>
        <end position="133"/>
    </location>
</feature>
<feature type="transmembrane region" description="Helical" evidence="2">
    <location>
        <begin position="140"/>
        <end position="160"/>
    </location>
</feature>
<feature type="transmembrane region" description="Helical" evidence="2">
    <location>
        <begin position="176"/>
        <end position="196"/>
    </location>
</feature>
<feature type="transmembrane region" description="Helical" evidence="2">
    <location>
        <begin position="202"/>
        <end position="222"/>
    </location>
</feature>
<feature type="transmembrane region" description="Helical" evidence="2">
    <location>
        <begin position="223"/>
        <end position="243"/>
    </location>
</feature>
<dbReference type="EMBL" id="DQ336395">
    <property type="protein sequence ID" value="ABC60377.1"/>
    <property type="molecule type" value="Genomic_DNA"/>
</dbReference>
<dbReference type="RefSeq" id="YP_492626.1">
    <property type="nucleotide sequence ID" value="NC_007787.2"/>
</dbReference>
<dbReference type="SMR" id="Q2LCR6"/>
<dbReference type="GeneID" id="3912608"/>
<dbReference type="GO" id="GO:0005743">
    <property type="term" value="C:mitochondrial inner membrane"/>
    <property type="evidence" value="ECO:0007669"/>
    <property type="project" value="UniProtKB-SubCell"/>
</dbReference>
<dbReference type="GO" id="GO:0045259">
    <property type="term" value="C:proton-transporting ATP synthase complex"/>
    <property type="evidence" value="ECO:0007669"/>
    <property type="project" value="UniProtKB-KW"/>
</dbReference>
<dbReference type="GO" id="GO:0046933">
    <property type="term" value="F:proton-transporting ATP synthase activity, rotational mechanism"/>
    <property type="evidence" value="ECO:0007669"/>
    <property type="project" value="TreeGrafter"/>
</dbReference>
<dbReference type="CDD" id="cd00310">
    <property type="entry name" value="ATP-synt_Fo_a_6"/>
    <property type="match status" value="1"/>
</dbReference>
<dbReference type="FunFam" id="1.20.120.220:FF:000003">
    <property type="entry name" value="ATP synthase subunit a"/>
    <property type="match status" value="1"/>
</dbReference>
<dbReference type="Gene3D" id="1.20.120.220">
    <property type="entry name" value="ATP synthase, F0 complex, subunit A"/>
    <property type="match status" value="1"/>
</dbReference>
<dbReference type="HAMAP" id="MF_01393">
    <property type="entry name" value="ATP_synth_a_bact"/>
    <property type="match status" value="1"/>
</dbReference>
<dbReference type="InterPro" id="IPR000568">
    <property type="entry name" value="ATP_synth_F0_asu"/>
</dbReference>
<dbReference type="InterPro" id="IPR023011">
    <property type="entry name" value="ATP_synth_F0_asu_AS"/>
</dbReference>
<dbReference type="InterPro" id="IPR045083">
    <property type="entry name" value="ATP_synth_F0_asu_bact/mt"/>
</dbReference>
<dbReference type="InterPro" id="IPR035908">
    <property type="entry name" value="F0_ATP_A_sf"/>
</dbReference>
<dbReference type="NCBIfam" id="TIGR01131">
    <property type="entry name" value="ATP_synt_6_or_A"/>
    <property type="match status" value="1"/>
</dbReference>
<dbReference type="NCBIfam" id="NF004482">
    <property type="entry name" value="PRK05815.2-4"/>
    <property type="match status" value="1"/>
</dbReference>
<dbReference type="PANTHER" id="PTHR11410">
    <property type="entry name" value="ATP SYNTHASE SUBUNIT A"/>
    <property type="match status" value="1"/>
</dbReference>
<dbReference type="PANTHER" id="PTHR11410:SF0">
    <property type="entry name" value="ATP SYNTHASE SUBUNIT A"/>
    <property type="match status" value="1"/>
</dbReference>
<dbReference type="Pfam" id="PF00119">
    <property type="entry name" value="ATP-synt_A"/>
    <property type="match status" value="1"/>
</dbReference>
<dbReference type="PRINTS" id="PR00123">
    <property type="entry name" value="ATPASEA"/>
</dbReference>
<dbReference type="SUPFAM" id="SSF81336">
    <property type="entry name" value="F1F0 ATP synthase subunit A"/>
    <property type="match status" value="1"/>
</dbReference>
<dbReference type="PROSITE" id="PS00449">
    <property type="entry name" value="ATPASE_A"/>
    <property type="match status" value="1"/>
</dbReference>
<evidence type="ECO:0000250" key="1"/>
<evidence type="ECO:0000255" key="2"/>
<evidence type="ECO:0000305" key="3"/>
<proteinExistence type="inferred from homology"/>